<gene>
    <name evidence="1" type="primary">rimP</name>
    <name type="ordered locus">XfasM23_0177</name>
</gene>
<dbReference type="EMBL" id="CP001011">
    <property type="protein sequence ID" value="ACB91634.1"/>
    <property type="molecule type" value="Genomic_DNA"/>
</dbReference>
<dbReference type="RefSeq" id="WP_012382428.1">
    <property type="nucleotide sequence ID" value="NC_010577.1"/>
</dbReference>
<dbReference type="SMR" id="B2I724"/>
<dbReference type="GeneID" id="93903883"/>
<dbReference type="KEGG" id="xfn:XfasM23_0177"/>
<dbReference type="HOGENOM" id="CLU_070525_1_1_6"/>
<dbReference type="Proteomes" id="UP000001698">
    <property type="component" value="Chromosome"/>
</dbReference>
<dbReference type="GO" id="GO:0005829">
    <property type="term" value="C:cytosol"/>
    <property type="evidence" value="ECO:0007669"/>
    <property type="project" value="TreeGrafter"/>
</dbReference>
<dbReference type="GO" id="GO:0000028">
    <property type="term" value="P:ribosomal small subunit assembly"/>
    <property type="evidence" value="ECO:0007669"/>
    <property type="project" value="TreeGrafter"/>
</dbReference>
<dbReference type="GO" id="GO:0006412">
    <property type="term" value="P:translation"/>
    <property type="evidence" value="ECO:0007669"/>
    <property type="project" value="TreeGrafter"/>
</dbReference>
<dbReference type="CDD" id="cd01734">
    <property type="entry name" value="YlxS_C"/>
    <property type="match status" value="1"/>
</dbReference>
<dbReference type="FunFam" id="3.30.300.70:FF:000001">
    <property type="entry name" value="Ribosome maturation factor RimP"/>
    <property type="match status" value="1"/>
</dbReference>
<dbReference type="Gene3D" id="3.30.300.70">
    <property type="entry name" value="RimP-like superfamily, N-terminal"/>
    <property type="match status" value="1"/>
</dbReference>
<dbReference type="HAMAP" id="MF_01077">
    <property type="entry name" value="RimP"/>
    <property type="match status" value="1"/>
</dbReference>
<dbReference type="InterPro" id="IPR003728">
    <property type="entry name" value="Ribosome_maturation_RimP"/>
</dbReference>
<dbReference type="InterPro" id="IPR028998">
    <property type="entry name" value="RimP_C"/>
</dbReference>
<dbReference type="InterPro" id="IPR036847">
    <property type="entry name" value="RimP_C_sf"/>
</dbReference>
<dbReference type="InterPro" id="IPR028989">
    <property type="entry name" value="RimP_N"/>
</dbReference>
<dbReference type="InterPro" id="IPR035956">
    <property type="entry name" value="RimP_N_sf"/>
</dbReference>
<dbReference type="NCBIfam" id="NF000931">
    <property type="entry name" value="PRK00092.2-3"/>
    <property type="match status" value="1"/>
</dbReference>
<dbReference type="PANTHER" id="PTHR33867">
    <property type="entry name" value="RIBOSOME MATURATION FACTOR RIMP"/>
    <property type="match status" value="1"/>
</dbReference>
<dbReference type="PANTHER" id="PTHR33867:SF1">
    <property type="entry name" value="RIBOSOME MATURATION FACTOR RIMP"/>
    <property type="match status" value="1"/>
</dbReference>
<dbReference type="Pfam" id="PF17384">
    <property type="entry name" value="DUF150_C"/>
    <property type="match status" value="1"/>
</dbReference>
<dbReference type="Pfam" id="PF02576">
    <property type="entry name" value="RimP_N"/>
    <property type="match status" value="1"/>
</dbReference>
<dbReference type="SUPFAM" id="SSF74942">
    <property type="entry name" value="YhbC-like, C-terminal domain"/>
    <property type="match status" value="1"/>
</dbReference>
<dbReference type="SUPFAM" id="SSF75420">
    <property type="entry name" value="YhbC-like, N-terminal domain"/>
    <property type="match status" value="1"/>
</dbReference>
<feature type="chain" id="PRO_1000136806" description="Ribosome maturation factor RimP">
    <location>
        <begin position="1"/>
        <end position="199"/>
    </location>
</feature>
<feature type="region of interest" description="Disordered" evidence="2">
    <location>
        <begin position="170"/>
        <end position="199"/>
    </location>
</feature>
<feature type="compositionally biased region" description="Polar residues" evidence="2">
    <location>
        <begin position="177"/>
        <end position="189"/>
    </location>
</feature>
<organism>
    <name type="scientific">Xylella fastidiosa (strain M23)</name>
    <dbReference type="NCBI Taxonomy" id="405441"/>
    <lineage>
        <taxon>Bacteria</taxon>
        <taxon>Pseudomonadati</taxon>
        <taxon>Pseudomonadota</taxon>
        <taxon>Gammaproteobacteria</taxon>
        <taxon>Lysobacterales</taxon>
        <taxon>Lysobacteraceae</taxon>
        <taxon>Xylella</taxon>
    </lineage>
</organism>
<comment type="function">
    <text evidence="1">Required for maturation of 30S ribosomal subunits.</text>
</comment>
<comment type="subcellular location">
    <subcellularLocation>
        <location evidence="1">Cytoplasm</location>
    </subcellularLocation>
</comment>
<comment type="similarity">
    <text evidence="1">Belongs to the RimP family.</text>
</comment>
<proteinExistence type="inferred from homology"/>
<protein>
    <recommendedName>
        <fullName evidence="1">Ribosome maturation factor RimP</fullName>
    </recommendedName>
</protein>
<reference key="1">
    <citation type="journal article" date="2010" name="J. Bacteriol.">
        <title>Whole genome sequences of two Xylella fastidiosa strains (M12 and M23) causing almond leaf scorch disease in California.</title>
        <authorList>
            <person name="Chen J."/>
            <person name="Xie G."/>
            <person name="Han S."/>
            <person name="Chertkov O."/>
            <person name="Sims D."/>
            <person name="Civerolo E.L."/>
        </authorList>
    </citation>
    <scope>NUCLEOTIDE SEQUENCE [LARGE SCALE GENOMIC DNA]</scope>
    <source>
        <strain>M23</strain>
    </source>
</reference>
<sequence>MSDKGIEIVNLLAPKVEMLGFDLLGAEYLLVPSGAILRLYIDIPFAMQPECMVSIDDCERVSREVSAYLDLEEPISGNYTLEVSSPGLDRRLFTLEQFARHHNHLVKVGLKLQQHGSRRLQGKIVRVEQVGGFVVLLVNGVELAVDFNNIDKARIVPDWSALGLAPLEKSKHDTKKMSQGSKKPSNESAARQAVRGVIR</sequence>
<evidence type="ECO:0000255" key="1">
    <source>
        <dbReference type="HAMAP-Rule" id="MF_01077"/>
    </source>
</evidence>
<evidence type="ECO:0000256" key="2">
    <source>
        <dbReference type="SAM" id="MobiDB-lite"/>
    </source>
</evidence>
<name>RIMP_XYLF2</name>
<keyword id="KW-0963">Cytoplasm</keyword>
<keyword id="KW-0690">Ribosome biogenesis</keyword>
<accession>B2I724</accession>